<organism>
    <name type="scientific">Myxococcus xanthus (strain DK1622)</name>
    <dbReference type="NCBI Taxonomy" id="246197"/>
    <lineage>
        <taxon>Bacteria</taxon>
        <taxon>Pseudomonadati</taxon>
        <taxon>Myxococcota</taxon>
        <taxon>Myxococcia</taxon>
        <taxon>Myxococcales</taxon>
        <taxon>Cystobacterineae</taxon>
        <taxon>Myxococcaceae</taxon>
        <taxon>Myxococcus</taxon>
    </lineage>
</organism>
<gene>
    <name evidence="5" type="primary">encC</name>
    <name type="ordered locus">MXAN_4464</name>
</gene>
<reference key="1">
    <citation type="journal article" date="2006" name="Proc. Natl. Acad. Sci. U.S.A.">
        <title>Evolution of sensory complexity recorded in a myxobacterial genome.</title>
        <authorList>
            <person name="Goldman B.S."/>
            <person name="Nierman W.C."/>
            <person name="Kaiser D."/>
            <person name="Slater S.C."/>
            <person name="Durkin A.S."/>
            <person name="Eisen J.A."/>
            <person name="Ronning C.M."/>
            <person name="Barbazuk W.B."/>
            <person name="Blanchard M."/>
            <person name="Field C."/>
            <person name="Halling C."/>
            <person name="Hinkle G."/>
            <person name="Iartchuk O."/>
            <person name="Kim H.S."/>
            <person name="Mackenzie C."/>
            <person name="Madupu R."/>
            <person name="Miller N."/>
            <person name="Shvartsbeyn A."/>
            <person name="Sullivan S.A."/>
            <person name="Vaudin M."/>
            <person name="Wiegand R."/>
            <person name="Kaplan H.B."/>
        </authorList>
    </citation>
    <scope>NUCLEOTIDE SEQUENCE [LARGE SCALE GENOMIC DNA]</scope>
    <source>
        <strain>DK1622</strain>
    </source>
</reference>
<reference key="2">
    <citation type="journal article" date="2014" name="EMBO J.">
        <title>A virus capsid-like nanocompartment that stores iron and protects bacteria from oxidative stress.</title>
        <authorList>
            <person name="McHugh C.A."/>
            <person name="Fontana J."/>
            <person name="Nemecek D."/>
            <person name="Cheng N."/>
            <person name="Aksyuk A.A."/>
            <person name="Heymann J.B."/>
            <person name="Winkler D.C."/>
            <person name="Lam A.S."/>
            <person name="Wall J.S."/>
            <person name="Steven A.C."/>
            <person name="Hoiczyk E."/>
        </authorList>
    </citation>
    <scope>IDENTIFICATION BY MASS SPECTROMETRY</scope>
    <scope>SEQUENCE REVISION TO N-TERMINUS</scope>
    <scope>FUNCTION</scope>
    <scope>SUBCELLULAR LOCATION</scope>
    <scope>DOMAIN</scope>
    <source>
        <strain>DK1622</strain>
    </source>
</reference>
<reference key="3">
    <citation type="journal article" date="2019" name="ACS Nano">
        <title>Iron-Sequestering Nanocompartments as Multiplexed Electron Microscopy Gene Reporters.</title>
        <authorList>
            <person name="Sigmund F."/>
            <person name="Pettinger S."/>
            <person name="Kube M."/>
            <person name="Schneider F."/>
            <person name="Schifferer M."/>
            <person name="Schneider S."/>
            <person name="Efremova M.V."/>
            <person name="Pujol-Marti J."/>
            <person name="Aichler M."/>
            <person name="Walch A."/>
            <person name="Misgeld T."/>
            <person name="Dietz H."/>
            <person name="Westmeyer G.G."/>
        </authorList>
    </citation>
    <scope>FUNCTION</scope>
    <scope>SUBCELLULAR LOCATION</scope>
    <scope>BIOTECHNOLOGY</scope>
    <source>
        <strain>DK1622</strain>
    </source>
</reference>
<name>ENCC_MYXXD</name>
<proteinExistence type="evidence at protein level"/>
<protein>
    <recommendedName>
        <fullName evidence="5">Encapsulin nanocompartment cargo protein EncC</fullName>
    </recommendedName>
</protein>
<feature type="chain" id="PRO_0000455322" description="Encapsulin nanocompartment cargo protein EncC">
    <location>
        <begin position="1"/>
        <end position="130"/>
    </location>
</feature>
<feature type="region of interest" description="Disordered" evidence="2">
    <location>
        <begin position="103"/>
        <end position="130"/>
    </location>
</feature>
<feature type="region of interest" description="Probable targeting peptide" evidence="7">
    <location>
        <begin position="123"/>
        <end position="130"/>
    </location>
</feature>
<feature type="short sequence motif" description="Di-iron-binding motif" evidence="7">
    <location>
        <begin position="61"/>
        <end position="64"/>
    </location>
</feature>
<feature type="binding site" evidence="1">
    <location>
        <position position="31"/>
    </location>
    <ligand>
        <name>Fe cation</name>
        <dbReference type="ChEBI" id="CHEBI:24875"/>
        <label>1</label>
    </ligand>
</feature>
<feature type="binding site" evidence="1">
    <location>
        <position position="31"/>
    </location>
    <ligand>
        <name>Fe cation</name>
        <dbReference type="ChEBI" id="CHEBI:24875"/>
        <label>2</label>
    </ligand>
</feature>
<feature type="binding site" evidence="1">
    <location>
        <position position="61"/>
    </location>
    <ligand>
        <name>Fe cation</name>
        <dbReference type="ChEBI" id="CHEBI:24875"/>
        <label>1</label>
    </ligand>
</feature>
<feature type="binding site" evidence="1">
    <location>
        <position position="61"/>
    </location>
    <ligand>
        <name>Fe cation</name>
        <dbReference type="ChEBI" id="CHEBI:24875"/>
        <label>2</label>
    </ligand>
</feature>
<feature type="binding site" evidence="1">
    <location>
        <position position="64"/>
    </location>
    <ligand>
        <name>Fe cation</name>
        <dbReference type="ChEBI" id="CHEBI:24875"/>
        <label>1</label>
    </ligand>
</feature>
<feature type="binding site" evidence="1">
    <location>
        <position position="64"/>
    </location>
    <ligand>
        <name>Fe cation</name>
        <dbReference type="ChEBI" id="CHEBI:24875"/>
        <label>2</label>
    </ligand>
</feature>
<feature type="helix" evidence="8">
    <location>
        <begin position="18"/>
        <end position="42"/>
    </location>
</feature>
<feature type="helix" evidence="8">
    <location>
        <begin position="48"/>
        <end position="73"/>
    </location>
</feature>
<feature type="strand" evidence="8">
    <location>
        <begin position="75"/>
        <end position="77"/>
    </location>
</feature>
<feature type="turn" evidence="8">
    <location>
        <begin position="79"/>
        <end position="83"/>
    </location>
</feature>
<feature type="helix" evidence="8">
    <location>
        <begin position="85"/>
        <end position="90"/>
    </location>
</feature>
<sequence>MPQTNPFHSLVPRKMTDTELARSIRLNIEAELDAINLYAAHIDATDNEDAKAILQHVMDEEREHAALFWELIARLDPEQAAHAKEAVEKYRLITSGASHEAVEAVGKEGAAPSPADVTPEKRLTVGSLRR</sequence>
<keyword id="KW-0002">3D-structure</keyword>
<keyword id="KW-1284">Encapsulin nanocompartment</keyword>
<keyword id="KW-0408">Iron</keyword>
<keyword id="KW-0409">Iron storage</keyword>
<keyword id="KW-0479">Metal-binding</keyword>
<keyword id="KW-1185">Reference proteome</keyword>
<accession>Q1D3Y8</accession>
<dbReference type="EMBL" id="CP000113">
    <property type="protein sequence ID" value="ABF92698.1"/>
    <property type="status" value="ALT_INIT"/>
    <property type="molecule type" value="Genomic_DNA"/>
</dbReference>
<dbReference type="RefSeq" id="WP_020478352.1">
    <property type="nucleotide sequence ID" value="NC_008095.1"/>
</dbReference>
<dbReference type="PDB" id="7S4Q">
    <property type="method" value="EM"/>
    <property type="resolution" value="3.12 A"/>
    <property type="chains" value="F/G/H=105-116"/>
</dbReference>
<dbReference type="PDB" id="7S8T">
    <property type="method" value="X-ray"/>
    <property type="resolution" value="2.49 A"/>
    <property type="chains" value="A/B/C/D/E/F/G/H/I/J=1-130"/>
</dbReference>
<dbReference type="PDB" id="9B9Q">
    <property type="method" value="EM"/>
    <property type="resolution" value="3.14 A"/>
    <property type="chains" value="F/G/H=119-130"/>
</dbReference>
<dbReference type="PDB" id="9BC8">
    <property type="method" value="EM"/>
    <property type="resolution" value="3.46 A"/>
    <property type="chains" value="E/F/G/H=119-130"/>
</dbReference>
<dbReference type="PDBsum" id="7S4Q"/>
<dbReference type="PDBsum" id="7S8T"/>
<dbReference type="PDBsum" id="9B9Q"/>
<dbReference type="PDBsum" id="9BC8"/>
<dbReference type="EMDB" id="EMD-24832"/>
<dbReference type="EMDB" id="EMD-44388"/>
<dbReference type="EMDB" id="EMD-44427"/>
<dbReference type="SMR" id="Q1D3Y8"/>
<dbReference type="IntAct" id="Q1D3Y8">
    <property type="interactions" value="1"/>
</dbReference>
<dbReference type="MINT" id="Q1D3Y8"/>
<dbReference type="STRING" id="246197.MXAN_4464"/>
<dbReference type="TCDB" id="1.S.7.1.1">
    <property type="family name" value="the bacterial/archaeal nanocompartment encapsulin shell protein2 (banc-sp2) family"/>
</dbReference>
<dbReference type="EnsemblBacteria" id="ABF92698">
    <property type="protein sequence ID" value="ABF92698"/>
    <property type="gene ID" value="MXAN_4464"/>
</dbReference>
<dbReference type="GeneID" id="41361774"/>
<dbReference type="KEGG" id="mxa:MXAN_4464"/>
<dbReference type="eggNOG" id="COG3461">
    <property type="taxonomic scope" value="Bacteria"/>
</dbReference>
<dbReference type="HOGENOM" id="CLU_141525_0_0_7"/>
<dbReference type="OrthoDB" id="5381996at2"/>
<dbReference type="Proteomes" id="UP000002402">
    <property type="component" value="Chromosome"/>
</dbReference>
<dbReference type="GO" id="GO:0140737">
    <property type="term" value="C:encapsulin nanocompartment"/>
    <property type="evidence" value="ECO:0000314"/>
    <property type="project" value="UniProtKB"/>
</dbReference>
<dbReference type="GO" id="GO:0046872">
    <property type="term" value="F:metal ion binding"/>
    <property type="evidence" value="ECO:0007669"/>
    <property type="project" value="UniProtKB-KW"/>
</dbReference>
<dbReference type="GO" id="GO:0006879">
    <property type="term" value="P:intracellular iron ion homeostasis"/>
    <property type="evidence" value="ECO:0007669"/>
    <property type="project" value="UniProtKB-KW"/>
</dbReference>
<dbReference type="Gene3D" id="6.10.140.1960">
    <property type="match status" value="1"/>
</dbReference>
<dbReference type="InterPro" id="IPR051429">
    <property type="entry name" value="Encapsulin_nc"/>
</dbReference>
<dbReference type="InterPro" id="IPR054581">
    <property type="entry name" value="EncFtn-like"/>
</dbReference>
<dbReference type="InterPro" id="IPR009078">
    <property type="entry name" value="Ferritin-like_SF"/>
</dbReference>
<dbReference type="PANTHER" id="PTHR37165">
    <property type="entry name" value="PEPTIDASE U56 FAMILY"/>
    <property type="match status" value="1"/>
</dbReference>
<dbReference type="PANTHER" id="PTHR37165:SF1">
    <property type="entry name" value="TYPE 1 ENCAPSULIN SHELL PROTEIN"/>
    <property type="match status" value="1"/>
</dbReference>
<dbReference type="Pfam" id="PF22277">
    <property type="entry name" value="EncFtn-like"/>
    <property type="match status" value="1"/>
</dbReference>
<dbReference type="SUPFAM" id="SSF47240">
    <property type="entry name" value="Ferritin-like"/>
    <property type="match status" value="1"/>
</dbReference>
<comment type="function">
    <text evidence="3 7">Cargo protein of a type 1 encapsulin nanocompartment. May help nucleate Fe atoms in the interior of the encapsulin nanocompartment (Probable). Present in about 92 copies/encapsulin nanocompartment (PubMed:25024436).</text>
</comment>
<comment type="subcellular location">
    <subcellularLocation>
        <location evidence="3">Encapsulin nanocompartment</location>
    </subcellularLocation>
    <text evidence="7">Probably lies against the interior face of the nanocompartment.</text>
</comment>
<comment type="biotechnology">
    <text evidence="4">The encapsulin and a cargo construct (an encB-encC-encD fusion) can be overexpressed in E.coli and in human HEK293T cells. In HEK293T in the presence of 0.5 M ferrous ammonium sulfate nanocompartments can be detected and used as cell markers. Coexpression of this nanocompartment with a larger nanocompartment from Q.thermotolerans (AC A0A0F5HPP7) allows of expression of different sized iron-rich particles. The encapsulin shell proteins are not seen to mix.</text>
</comment>
<comment type="similarity">
    <text evidence="6">Belongs to the ferritin-like superfamily.</text>
</comment>
<comment type="sequence caution" evidence="3">
    <conflict type="erroneous initiation">
        <sequence resource="EMBL-CDS" id="ABF92698"/>
    </conflict>
    <text>Truncated N-terminus.</text>
</comment>
<evidence type="ECO:0000250" key="1">
    <source>
        <dbReference type="UniProtKB" id="Q2RVS1"/>
    </source>
</evidence>
<evidence type="ECO:0000256" key="2">
    <source>
        <dbReference type="SAM" id="MobiDB-lite"/>
    </source>
</evidence>
<evidence type="ECO:0000269" key="3">
    <source>
    </source>
</evidence>
<evidence type="ECO:0000269" key="4">
    <source>
    </source>
</evidence>
<evidence type="ECO:0000303" key="5">
    <source>
    </source>
</evidence>
<evidence type="ECO:0000305" key="6"/>
<evidence type="ECO:0000305" key="7">
    <source>
    </source>
</evidence>
<evidence type="ECO:0007829" key="8">
    <source>
        <dbReference type="PDB" id="7S8T"/>
    </source>
</evidence>